<comment type="function">
    <text evidence="1">Responsible for transport of beta-galactosides into the cell, with the concomitant import of a proton (symport system).</text>
</comment>
<comment type="catalytic activity">
    <reaction evidence="1">
        <text>lactose(in) + H(+)(in) = lactose(out) + H(+)(out)</text>
        <dbReference type="Rhea" id="RHEA:28867"/>
        <dbReference type="ChEBI" id="CHEBI:15378"/>
        <dbReference type="ChEBI" id="CHEBI:17716"/>
    </reaction>
    <physiologicalReaction direction="right-to-left" evidence="1">
        <dbReference type="Rhea" id="RHEA:28869"/>
    </physiologicalReaction>
</comment>
<comment type="subcellular location">
    <subcellularLocation>
        <location evidence="1">Cell inner membrane</location>
        <topology evidence="1">Multi-pass membrane protein</topology>
    </subcellularLocation>
</comment>
<comment type="similarity">
    <text evidence="3">Belongs to the major facilitator superfamily. Oligosaccharide:H(+) symporter (OHS) (TC 2.A.1.5) family.</text>
</comment>
<comment type="sequence caution" evidence="3">
    <conflict type="erroneous initiation">
        <sequence resource="EMBL-CDS" id="AAA25083"/>
    </conflict>
</comment>
<organism>
    <name type="scientific">Klebsiella pneumoniae</name>
    <dbReference type="NCBI Taxonomy" id="573"/>
    <lineage>
        <taxon>Bacteria</taxon>
        <taxon>Pseudomonadati</taxon>
        <taxon>Pseudomonadota</taxon>
        <taxon>Gammaproteobacteria</taxon>
        <taxon>Enterobacterales</taxon>
        <taxon>Enterobacteriaceae</taxon>
        <taxon>Klebsiella/Raoultella group</taxon>
        <taxon>Klebsiella</taxon>
        <taxon>Klebsiella pneumoniae complex</taxon>
    </lineage>
</organism>
<sequence length="131" mass="14959">MKFSELAPRERHNFVYFLLFFFFYHFIMSAYFPFFPVWLADVNHLTKTETGIVFSSISLFAIIFQPVFGLMSDKLGLRKHLLWTITVLLILFAPFFIFVFSPLLQMNIIAGSLVGGIYLGIVFSTAPGVGS</sequence>
<accession>P59832</accession>
<evidence type="ECO:0000250" key="1">
    <source>
        <dbReference type="UniProtKB" id="P02920"/>
    </source>
</evidence>
<evidence type="ECO:0000255" key="2"/>
<evidence type="ECO:0000305" key="3"/>
<reference key="1">
    <citation type="journal article" date="1985" name="J. Bacteriol.">
        <title>Nucleotide sequence of Klebsiella pneumoniae lac genes.</title>
        <authorList>
            <person name="Buvinger W.E."/>
            <person name="Riley M."/>
        </authorList>
    </citation>
    <scope>NUCLEOTIDE SEQUENCE [GENOMIC DNA]</scope>
    <source>
        <strain>T17R1</strain>
    </source>
</reference>
<name>LACY_KLEPN</name>
<gene>
    <name type="primary">lacY</name>
</gene>
<feature type="chain" id="PRO_0000196186" description="Lactose permease">
    <location>
        <begin position="1"/>
        <end position="131" status="greater than"/>
    </location>
</feature>
<feature type="topological domain" description="Cytoplasmic" evidence="3">
    <location>
        <begin position="1"/>
        <end position="13"/>
    </location>
</feature>
<feature type="transmembrane region" description="Helical" evidence="2">
    <location>
        <begin position="14"/>
        <end position="34"/>
    </location>
</feature>
<feature type="topological domain" description="Periplasmic" evidence="3">
    <location>
        <begin position="35"/>
        <end position="50"/>
    </location>
</feature>
<feature type="transmembrane region" description="Helical" evidence="2">
    <location>
        <begin position="51"/>
        <end position="71"/>
    </location>
</feature>
<feature type="topological domain" description="Cytoplasmic" evidence="3">
    <location>
        <begin position="72"/>
        <end position="80"/>
    </location>
</feature>
<feature type="transmembrane region" description="Helical" evidence="2">
    <location>
        <begin position="81"/>
        <end position="101"/>
    </location>
</feature>
<feature type="topological domain" description="Periplasmic" evidence="3">
    <location>
        <position position="102"/>
    </location>
</feature>
<feature type="transmembrane region" description="Helical" evidence="2">
    <location>
        <begin position="103"/>
        <end position="123"/>
    </location>
</feature>
<feature type="topological domain" description="Cytoplasmic" evidence="3">
    <location>
        <begin position="124"/>
        <end position="131"/>
    </location>
</feature>
<feature type="non-terminal residue">
    <location>
        <position position="131"/>
    </location>
</feature>
<proteinExistence type="inferred from homology"/>
<dbReference type="EMBL" id="M11441">
    <property type="protein sequence ID" value="AAA25083.1"/>
    <property type="status" value="ALT_INIT"/>
    <property type="molecule type" value="Genomic_DNA"/>
</dbReference>
<dbReference type="PIR" id="C24925">
    <property type="entry name" value="C24925"/>
</dbReference>
<dbReference type="SMR" id="P59832"/>
<dbReference type="GO" id="GO:0005886">
    <property type="term" value="C:plasma membrane"/>
    <property type="evidence" value="ECO:0007669"/>
    <property type="project" value="UniProtKB-SubCell"/>
</dbReference>
<dbReference type="GO" id="GO:0030395">
    <property type="term" value="F:lactose binding"/>
    <property type="evidence" value="ECO:0007669"/>
    <property type="project" value="TreeGrafter"/>
</dbReference>
<dbReference type="GO" id="GO:0015528">
    <property type="term" value="F:lactose:proton symporter activity"/>
    <property type="evidence" value="ECO:0007669"/>
    <property type="project" value="TreeGrafter"/>
</dbReference>
<dbReference type="Gene3D" id="1.20.1250.20">
    <property type="entry name" value="MFS general substrate transporter like domains"/>
    <property type="match status" value="1"/>
</dbReference>
<dbReference type="InterPro" id="IPR000576">
    <property type="entry name" value="LacY/RafB_perm_fam"/>
</dbReference>
<dbReference type="InterPro" id="IPR018457">
    <property type="entry name" value="LacY/RafB_perm_fam_CS"/>
</dbReference>
<dbReference type="InterPro" id="IPR020846">
    <property type="entry name" value="MFS_dom"/>
</dbReference>
<dbReference type="InterPro" id="IPR036259">
    <property type="entry name" value="MFS_trans_sf"/>
</dbReference>
<dbReference type="PANTHER" id="PTHR23522:SF10">
    <property type="entry name" value="3-PHENYLPROPIONIC ACID TRANSPORTER-RELATED"/>
    <property type="match status" value="1"/>
</dbReference>
<dbReference type="PANTHER" id="PTHR23522">
    <property type="entry name" value="BLL5896 PROTEIN"/>
    <property type="match status" value="1"/>
</dbReference>
<dbReference type="Pfam" id="PF01306">
    <property type="entry name" value="LacY_symp"/>
    <property type="match status" value="1"/>
</dbReference>
<dbReference type="PRINTS" id="PR00174">
    <property type="entry name" value="LACYSMPORT"/>
</dbReference>
<dbReference type="SUPFAM" id="SSF103473">
    <property type="entry name" value="MFS general substrate transporter"/>
    <property type="match status" value="1"/>
</dbReference>
<dbReference type="PROSITE" id="PS00896">
    <property type="entry name" value="LACY_1"/>
    <property type="match status" value="1"/>
</dbReference>
<dbReference type="PROSITE" id="PS50850">
    <property type="entry name" value="MFS"/>
    <property type="match status" value="1"/>
</dbReference>
<keyword id="KW-0997">Cell inner membrane</keyword>
<keyword id="KW-1003">Cell membrane</keyword>
<keyword id="KW-0472">Membrane</keyword>
<keyword id="KW-0762">Sugar transport</keyword>
<keyword id="KW-0769">Symport</keyword>
<keyword id="KW-0812">Transmembrane</keyword>
<keyword id="KW-1133">Transmembrane helix</keyword>
<keyword id="KW-0813">Transport</keyword>
<protein>
    <recommendedName>
        <fullName>Lactose permease</fullName>
    </recommendedName>
    <alternativeName>
        <fullName>Lactose-proton symport</fullName>
    </alternativeName>
</protein>